<dbReference type="EMBL" id="AF395587">
    <property type="protein sequence ID" value="AAK83858.1"/>
    <property type="molecule type" value="mRNA"/>
</dbReference>
<dbReference type="SMR" id="Q962Y8"/>
<dbReference type="EnsemblMetazoa" id="XM_050693542.1">
    <property type="protein sequence ID" value="XP_050549499.1"/>
    <property type="gene ID" value="LOC118272864"/>
</dbReference>
<dbReference type="Proteomes" id="UP000829999">
    <property type="component" value="Unplaced"/>
</dbReference>
<dbReference type="GO" id="GO:0022625">
    <property type="term" value="C:cytosolic large ribosomal subunit"/>
    <property type="evidence" value="ECO:0007669"/>
    <property type="project" value="TreeGrafter"/>
</dbReference>
<dbReference type="GO" id="GO:0003723">
    <property type="term" value="F:RNA binding"/>
    <property type="evidence" value="ECO:0007669"/>
    <property type="project" value="TreeGrafter"/>
</dbReference>
<dbReference type="GO" id="GO:0003735">
    <property type="term" value="F:structural constituent of ribosome"/>
    <property type="evidence" value="ECO:0007669"/>
    <property type="project" value="InterPro"/>
</dbReference>
<dbReference type="GO" id="GO:0006412">
    <property type="term" value="P:translation"/>
    <property type="evidence" value="ECO:0007669"/>
    <property type="project" value="InterPro"/>
</dbReference>
<dbReference type="FunFam" id="3.100.10.10:FF:000001">
    <property type="entry name" value="60S ribosomal protein L18"/>
    <property type="match status" value="1"/>
</dbReference>
<dbReference type="Gene3D" id="3.100.10.10">
    <property type="match status" value="1"/>
</dbReference>
<dbReference type="InterPro" id="IPR000039">
    <property type="entry name" value="Ribosomal_eL18"/>
</dbReference>
<dbReference type="InterPro" id="IPR021132">
    <property type="entry name" value="Ribosomal_eL18/eL18-A/B/_CS"/>
</dbReference>
<dbReference type="InterPro" id="IPR021131">
    <property type="entry name" value="Ribosomal_uL15/eL18"/>
</dbReference>
<dbReference type="InterPro" id="IPR036227">
    <property type="entry name" value="Ribosomal_uL15/eL18_sf"/>
</dbReference>
<dbReference type="PANTHER" id="PTHR10934">
    <property type="entry name" value="60S RIBOSOMAL PROTEIN L18"/>
    <property type="match status" value="1"/>
</dbReference>
<dbReference type="PANTHER" id="PTHR10934:SF2">
    <property type="entry name" value="LARGE RIBOSOMAL SUBUNIT PROTEIN EL18"/>
    <property type="match status" value="1"/>
</dbReference>
<dbReference type="Pfam" id="PF17135">
    <property type="entry name" value="Ribosomal_L18"/>
    <property type="match status" value="1"/>
</dbReference>
<dbReference type="SUPFAM" id="SSF52080">
    <property type="entry name" value="Ribosomal proteins L15p and L18e"/>
    <property type="match status" value="1"/>
</dbReference>
<dbReference type="PROSITE" id="PS01106">
    <property type="entry name" value="RIBOSOMAL_L18E"/>
    <property type="match status" value="1"/>
</dbReference>
<gene>
    <name type="primary">RpL18</name>
</gene>
<sequence>MGIDINHKHDRKVRRTEVKSQDVYLRLLVKLYRYLARRTNSKFNTIILRRLFMSRINRPPLSLSRLARHMKKPTREGMIAVVVGTITNDVRLYKVPKMSVAALHVTEKARARILAAGGEILTFDQLALRAPTGAKTVLLQGRRNAREAVRHFGPAPGAPRSHTKPYVRTKGHERARPRRRSNV</sequence>
<accession>Q962Y8</accession>
<evidence type="ECO:0000250" key="1"/>
<evidence type="ECO:0000256" key="2">
    <source>
        <dbReference type="SAM" id="MobiDB-lite"/>
    </source>
</evidence>
<evidence type="ECO:0000305" key="3"/>
<feature type="chain" id="PRO_0000291633" description="Large ribosomal subunit protein eL18">
    <location>
        <begin position="1"/>
        <end position="183"/>
    </location>
</feature>
<feature type="region of interest" description="Disordered" evidence="2">
    <location>
        <begin position="150"/>
        <end position="183"/>
    </location>
</feature>
<feature type="compositionally biased region" description="Basic residues" evidence="2">
    <location>
        <begin position="161"/>
        <end position="183"/>
    </location>
</feature>
<organism>
    <name type="scientific">Spodoptera frugiperda</name>
    <name type="common">Fall armyworm</name>
    <dbReference type="NCBI Taxonomy" id="7108"/>
    <lineage>
        <taxon>Eukaryota</taxon>
        <taxon>Metazoa</taxon>
        <taxon>Ecdysozoa</taxon>
        <taxon>Arthropoda</taxon>
        <taxon>Hexapoda</taxon>
        <taxon>Insecta</taxon>
        <taxon>Pterygota</taxon>
        <taxon>Neoptera</taxon>
        <taxon>Endopterygota</taxon>
        <taxon>Lepidoptera</taxon>
        <taxon>Glossata</taxon>
        <taxon>Ditrysia</taxon>
        <taxon>Noctuoidea</taxon>
        <taxon>Noctuidae</taxon>
        <taxon>Amphipyrinae</taxon>
        <taxon>Spodoptera</taxon>
    </lineage>
</organism>
<keyword id="KW-0963">Cytoplasm</keyword>
<keyword id="KW-0687">Ribonucleoprotein</keyword>
<keyword id="KW-0689">Ribosomal protein</keyword>
<reference key="1">
    <citation type="journal article" date="2003" name="Bioinformatics">
        <title>Annotation pattern of ESTs from Spodoptera frugiperda Sf9 cells and analysis of the ribosomal protein genes reveal insect-specific features and unexpectedly low codon usage bias.</title>
        <authorList>
            <person name="Landais I."/>
            <person name="Ogliastro M."/>
            <person name="Mita K."/>
            <person name="Nohata J."/>
            <person name="Lopez-Ferber M."/>
            <person name="Duonor-Cerutti M."/>
            <person name="Shimada T."/>
            <person name="Fournier P."/>
            <person name="Devauchelle G."/>
        </authorList>
    </citation>
    <scope>NUCLEOTIDE SEQUENCE [LARGE SCALE MRNA]</scope>
</reference>
<protein>
    <recommendedName>
        <fullName evidence="3">Large ribosomal subunit protein eL18</fullName>
    </recommendedName>
    <alternativeName>
        <fullName>60S ribosomal protein L18</fullName>
    </alternativeName>
</protein>
<name>RL18_SPOFR</name>
<comment type="subcellular location">
    <subcellularLocation>
        <location evidence="1">Cytoplasm</location>
    </subcellularLocation>
</comment>
<comment type="similarity">
    <text evidence="3">Belongs to the eukaryotic ribosomal protein eL18 family.</text>
</comment>
<proteinExistence type="evidence at transcript level"/>